<feature type="chain" id="PRO_0000416973" description="L-lysine 2,3-aminomutase">
    <location>
        <begin position="1"/>
        <end position="414"/>
    </location>
</feature>
<feature type="domain" description="Radical SAM core" evidence="4">
    <location>
        <begin position="110"/>
        <end position="321"/>
    </location>
</feature>
<feature type="region of interest" description="Disordered" evidence="5">
    <location>
        <begin position="89"/>
        <end position="108"/>
    </location>
</feature>
<feature type="compositionally biased region" description="Basic and acidic residues" evidence="5">
    <location>
        <begin position="89"/>
        <end position="101"/>
    </location>
</feature>
<feature type="binding site" evidence="3">
    <location>
        <position position="124"/>
    </location>
    <ligand>
        <name>[4Fe-4S] cluster</name>
        <dbReference type="ChEBI" id="CHEBI:49883"/>
        <note>4Fe-4S-S-AdoMet</note>
    </ligand>
</feature>
<feature type="binding site" evidence="3">
    <location>
        <position position="128"/>
    </location>
    <ligand>
        <name>[4Fe-4S] cluster</name>
        <dbReference type="ChEBI" id="CHEBI:49883"/>
        <note>4Fe-4S-S-AdoMet</note>
    </ligand>
</feature>
<feature type="binding site" evidence="3">
    <location>
        <position position="131"/>
    </location>
    <ligand>
        <name>[4Fe-4S] cluster</name>
        <dbReference type="ChEBI" id="CHEBI:49883"/>
        <note>4Fe-4S-S-AdoMet</note>
    </ligand>
</feature>
<feature type="binding site" evidence="3">
    <location>
        <position position="267"/>
    </location>
    <ligand>
        <name>Zn(2+)</name>
        <dbReference type="ChEBI" id="CHEBI:29105"/>
    </ligand>
</feature>
<feature type="binding site" evidence="3">
    <location>
        <position position="374"/>
    </location>
    <ligand>
        <name>Zn(2+)</name>
        <dbReference type="ChEBI" id="CHEBI:29105"/>
    </ligand>
</feature>
<feature type="binding site" evidence="3">
    <location>
        <position position="376"/>
    </location>
    <ligand>
        <name>Zn(2+)</name>
        <dbReference type="ChEBI" id="CHEBI:29105"/>
    </ligand>
</feature>
<feature type="binding site" evidence="3">
    <location>
        <position position="379"/>
    </location>
    <ligand>
        <name>Zn(2+)</name>
        <dbReference type="ChEBI" id="CHEBI:29105"/>
    </ligand>
</feature>
<feature type="modified residue" description="N6-(pyridoxal phosphate)lysine" evidence="3">
    <location>
        <position position="336"/>
    </location>
</feature>
<evidence type="ECO:0000250" key="1"/>
<evidence type="ECO:0000250" key="2">
    <source>
        <dbReference type="UniProtKB" id="O34676"/>
    </source>
</evidence>
<evidence type="ECO:0000250" key="3">
    <source>
        <dbReference type="UniProtKB" id="Q9XBQ8"/>
    </source>
</evidence>
<evidence type="ECO:0000255" key="4">
    <source>
        <dbReference type="PROSITE-ProRule" id="PRU01266"/>
    </source>
</evidence>
<evidence type="ECO:0000256" key="5">
    <source>
        <dbReference type="SAM" id="MobiDB-lite"/>
    </source>
</evidence>
<evidence type="ECO:0000269" key="6">
    <source>
    </source>
</evidence>
<evidence type="ECO:0000305" key="7"/>
<evidence type="ECO:0000312" key="8">
    <source>
        <dbReference type="EMBL" id="CBH21502.1"/>
    </source>
</evidence>
<keyword id="KW-0004">4Fe-4S</keyword>
<keyword id="KW-0408">Iron</keyword>
<keyword id="KW-0411">Iron-sulfur</keyword>
<keyword id="KW-0413">Isomerase</keyword>
<keyword id="KW-0479">Metal-binding</keyword>
<keyword id="KW-0663">Pyridoxal phosphate</keyword>
<keyword id="KW-1185">Reference proteome</keyword>
<keyword id="KW-0949">S-adenosyl-L-methionine</keyword>
<keyword id="KW-0862">Zinc</keyword>
<organism>
    <name type="scientific">Acetoanaerobium sticklandii (strain ATCC 12662 / DSM 519 / JCM 1433 / CCUG 9281 / NCIMB 10654 / HF)</name>
    <name type="common">Clostridium sticklandii</name>
    <dbReference type="NCBI Taxonomy" id="499177"/>
    <lineage>
        <taxon>Bacteria</taxon>
        <taxon>Bacillati</taxon>
        <taxon>Bacillota</taxon>
        <taxon>Clostridia</taxon>
        <taxon>Peptostreptococcales</taxon>
        <taxon>Filifactoraceae</taxon>
        <taxon>Acetoanaerobium</taxon>
    </lineage>
</organism>
<protein>
    <recommendedName>
        <fullName evidence="8">L-lysine 2,3-aminomutase</fullName>
        <shortName evidence="3">LAM</shortName>
        <ecNumber evidence="3">5.4.3.2</ecNumber>
    </recommendedName>
    <alternativeName>
        <fullName evidence="3">KAM</fullName>
    </alternativeName>
</protein>
<sequence length="414" mass="46991">MSLKDKFFSHVSQEDWNDWKWQVRNRIETVEELKKYIPLTPEEEEGVKRCLDTLRMAITPYYLSLIDVENPNDPVRKQAVPLSLELHRAASDQEDPLHEDGDSPVPGLTHRYPDRVLLLMTDQCSMYCRHCTRRRFAGQTDSAVDTKQIDAAIEYIKNTPQVRDVLLSGGDALLISDEKLEYTIKRLREIPHVEVIRIGSRVPVVMPQRITPELVSMLKKYHPVWLNTHFNHPNEITEESKRACELLADAGIPLGNQSVLLAGVNDCMHVMKKLVNDLVKIRVRPYYIYQCDLSVGIEHFRTPVAKGIEIIEGLRGHTSGYCVPTFVVDAPGGGGKTPVMPNYVISQNHNKVILRNFEGVITTYDEPDHYTFHCDCDVCTGKTNVHKVGVAGLLNGETATLEPEGLERKQRGHH</sequence>
<reference key="1">
    <citation type="journal article" date="2010" name="BMC Genomics">
        <title>Clostridium sticklandii, a specialist in amino acid degradation:revisiting its metabolism through its genome sequence.</title>
        <authorList>
            <person name="Fonknechten N."/>
            <person name="Chaussonnerie S."/>
            <person name="Tricot S."/>
            <person name="Lajus A."/>
            <person name="Andreesen J.R."/>
            <person name="Perchat N."/>
            <person name="Pelletier E."/>
            <person name="Gouyvenoux M."/>
            <person name="Barbe V."/>
            <person name="Salanoubat M."/>
            <person name="Le Paslier D."/>
            <person name="Weissenbach J."/>
            <person name="Cohen G.N."/>
            <person name="Kreimeyer A."/>
        </authorList>
    </citation>
    <scope>NUCLEOTIDE SEQUENCE [LARGE SCALE GENOMIC DNA]</scope>
    <source>
        <strain evidence="6">ATCC 12662 / DSM 519 / JCM 1433 / CCUG 9281 / NCIMB 10654 / HF</strain>
    </source>
</reference>
<comment type="function">
    <text evidence="3">Catalyzes the interconversion of L-alpha-lysine and L-beta-lysine.</text>
</comment>
<comment type="catalytic activity">
    <reaction evidence="3">
        <text>L-lysine = (3S)-3,6-diaminohexanoate</text>
        <dbReference type="Rhea" id="RHEA:19177"/>
        <dbReference type="ChEBI" id="CHEBI:32551"/>
        <dbReference type="ChEBI" id="CHEBI:57434"/>
        <dbReference type="EC" id="5.4.3.2"/>
    </reaction>
</comment>
<comment type="cofactor">
    <cofactor evidence="1">
        <name>[4Fe-4S] cluster</name>
        <dbReference type="ChEBI" id="CHEBI:49883"/>
    </cofactor>
    <text evidence="1">Binds 1 [4Fe-4S] cluster. The cluster is coordinated with 3 cysteines and an exchangeable S-adenosyl-L-methionine.</text>
</comment>
<comment type="cofactor">
    <cofactor evidence="3">
        <name>pyridoxal 5'-phosphate</name>
        <dbReference type="ChEBI" id="CHEBI:597326"/>
    </cofactor>
</comment>
<comment type="cofactor">
    <cofactor evidence="3">
        <name>Zn(2+)</name>
        <dbReference type="ChEBI" id="CHEBI:29105"/>
    </cofactor>
    <text evidence="3">Binds 1 zinc ion per subunit.</text>
</comment>
<comment type="pathway">
    <text evidence="3">Amino-acid degradation; L-lysine degradation via acetate pathway.</text>
</comment>
<comment type="subunit">
    <text evidence="2">Homotetramer.</text>
</comment>
<comment type="similarity">
    <text evidence="7">Belongs to the radical SAM superfamily. KamA family.</text>
</comment>
<proteinExistence type="inferred from homology"/>
<dbReference type="EC" id="5.4.3.2" evidence="3"/>
<dbReference type="EMBL" id="FP565809">
    <property type="protein sequence ID" value="CBH21502.1"/>
    <property type="molecule type" value="Genomic_DNA"/>
</dbReference>
<dbReference type="SMR" id="E3PRJ8"/>
<dbReference type="STRING" id="1511.CLOST_1382"/>
<dbReference type="KEGG" id="cst:CLOST_1382"/>
<dbReference type="eggNOG" id="COG1509">
    <property type="taxonomic scope" value="Bacteria"/>
</dbReference>
<dbReference type="HOGENOM" id="CLU_032161_0_0_9"/>
<dbReference type="UniPathway" id="UPA00870"/>
<dbReference type="Proteomes" id="UP000007041">
    <property type="component" value="Chromosome"/>
</dbReference>
<dbReference type="GO" id="GO:0051539">
    <property type="term" value="F:4 iron, 4 sulfur cluster binding"/>
    <property type="evidence" value="ECO:0007669"/>
    <property type="project" value="UniProtKB-KW"/>
</dbReference>
<dbReference type="GO" id="GO:0050066">
    <property type="term" value="F:L-lysine 2,3-aminomutase activity"/>
    <property type="evidence" value="ECO:0007669"/>
    <property type="project" value="UniProtKB-EC"/>
</dbReference>
<dbReference type="GO" id="GO:0046872">
    <property type="term" value="F:metal ion binding"/>
    <property type="evidence" value="ECO:0007669"/>
    <property type="project" value="UniProtKB-KW"/>
</dbReference>
<dbReference type="GO" id="GO:0019475">
    <property type="term" value="P:L-lysine catabolic process to acetate"/>
    <property type="evidence" value="ECO:0007669"/>
    <property type="project" value="UniProtKB-UniPathway"/>
</dbReference>
<dbReference type="CDD" id="cd01335">
    <property type="entry name" value="Radical_SAM"/>
    <property type="match status" value="1"/>
</dbReference>
<dbReference type="FunFam" id="3.20.20.70:FF:000095">
    <property type="entry name" value="Lysine 2,3-aminomutase"/>
    <property type="match status" value="1"/>
</dbReference>
<dbReference type="Gene3D" id="6.10.140.1170">
    <property type="match status" value="1"/>
</dbReference>
<dbReference type="Gene3D" id="6.20.120.40">
    <property type="match status" value="1"/>
</dbReference>
<dbReference type="Gene3D" id="3.20.20.70">
    <property type="entry name" value="Aldolase class I"/>
    <property type="match status" value="1"/>
</dbReference>
<dbReference type="InterPro" id="IPR013785">
    <property type="entry name" value="Aldolase_TIM"/>
</dbReference>
<dbReference type="InterPro" id="IPR025895">
    <property type="entry name" value="LAM_C_dom"/>
</dbReference>
<dbReference type="InterPro" id="IPR003739">
    <property type="entry name" value="Lys_aminomutase/Glu_NH3_mut"/>
</dbReference>
<dbReference type="InterPro" id="IPR022459">
    <property type="entry name" value="Lysine_aminomutase"/>
</dbReference>
<dbReference type="InterPro" id="IPR007197">
    <property type="entry name" value="rSAM"/>
</dbReference>
<dbReference type="NCBIfam" id="TIGR00238">
    <property type="entry name" value="KamA family radical SAM protein"/>
    <property type="match status" value="1"/>
</dbReference>
<dbReference type="NCBIfam" id="TIGR03820">
    <property type="entry name" value="lys_2_3_AblA"/>
    <property type="match status" value="1"/>
</dbReference>
<dbReference type="PANTHER" id="PTHR30538:SF1">
    <property type="entry name" value="L-LYSINE 2,3-AMINOMUTASE"/>
    <property type="match status" value="1"/>
</dbReference>
<dbReference type="PANTHER" id="PTHR30538">
    <property type="entry name" value="LYSINE 2,3-AMINOMUTASE-RELATED"/>
    <property type="match status" value="1"/>
</dbReference>
<dbReference type="Pfam" id="PF12544">
    <property type="entry name" value="LAM_C"/>
    <property type="match status" value="1"/>
</dbReference>
<dbReference type="Pfam" id="PF04055">
    <property type="entry name" value="Radical_SAM"/>
    <property type="match status" value="1"/>
</dbReference>
<dbReference type="PIRSF" id="PIRSF004911">
    <property type="entry name" value="DUF160"/>
    <property type="match status" value="1"/>
</dbReference>
<dbReference type="SFLD" id="SFLDF00283">
    <property type="entry name" value="L-lysine_2_3-aminomutase_(LAM"/>
    <property type="match status" value="1"/>
</dbReference>
<dbReference type="SFLD" id="SFLDG01070">
    <property type="entry name" value="PLP-dependent"/>
    <property type="match status" value="1"/>
</dbReference>
<dbReference type="SUPFAM" id="SSF102114">
    <property type="entry name" value="Radical SAM enzymes"/>
    <property type="match status" value="1"/>
</dbReference>
<dbReference type="PROSITE" id="PS51918">
    <property type="entry name" value="RADICAL_SAM"/>
    <property type="match status" value="1"/>
</dbReference>
<gene>
    <name type="primary">kamA</name>
    <name type="ordered locus">CLOST_1382</name>
</gene>
<accession>E3PRJ8</accession>
<name>KAMA_ACESD</name>